<organism>
    <name type="scientific">Lactobacillus johnsonii (strain CNCM I-12250 / La1 / NCC 533)</name>
    <dbReference type="NCBI Taxonomy" id="257314"/>
    <lineage>
        <taxon>Bacteria</taxon>
        <taxon>Bacillati</taxon>
        <taxon>Bacillota</taxon>
        <taxon>Bacilli</taxon>
        <taxon>Lactobacillales</taxon>
        <taxon>Lactobacillaceae</taxon>
        <taxon>Lactobacillus</taxon>
    </lineage>
</organism>
<feature type="chain" id="PRO_0000337418" description="Elongation factor Tu">
    <location>
        <begin position="1"/>
        <end position="396"/>
    </location>
</feature>
<feature type="domain" description="tr-type G">
    <location>
        <begin position="11"/>
        <end position="205"/>
    </location>
</feature>
<feature type="region of interest" description="G1" evidence="1">
    <location>
        <begin position="20"/>
        <end position="27"/>
    </location>
</feature>
<feature type="region of interest" description="G2" evidence="1">
    <location>
        <begin position="61"/>
        <end position="65"/>
    </location>
</feature>
<feature type="region of interest" description="G3" evidence="1">
    <location>
        <begin position="82"/>
        <end position="85"/>
    </location>
</feature>
<feature type="region of interest" description="G4" evidence="1">
    <location>
        <begin position="137"/>
        <end position="140"/>
    </location>
</feature>
<feature type="region of interest" description="G5" evidence="1">
    <location>
        <begin position="175"/>
        <end position="177"/>
    </location>
</feature>
<feature type="binding site" evidence="2">
    <location>
        <begin position="20"/>
        <end position="27"/>
    </location>
    <ligand>
        <name>GTP</name>
        <dbReference type="ChEBI" id="CHEBI:37565"/>
    </ligand>
</feature>
<feature type="binding site" evidence="2">
    <location>
        <position position="27"/>
    </location>
    <ligand>
        <name>Mg(2+)</name>
        <dbReference type="ChEBI" id="CHEBI:18420"/>
    </ligand>
</feature>
<feature type="binding site" evidence="2">
    <location>
        <begin position="82"/>
        <end position="86"/>
    </location>
    <ligand>
        <name>GTP</name>
        <dbReference type="ChEBI" id="CHEBI:37565"/>
    </ligand>
</feature>
<feature type="binding site" evidence="2">
    <location>
        <begin position="137"/>
        <end position="140"/>
    </location>
    <ligand>
        <name>GTP</name>
        <dbReference type="ChEBI" id="CHEBI:37565"/>
    </ligand>
</feature>
<reference key="1">
    <citation type="journal article" date="2003" name="Appl. Environ. Microbiol.">
        <title>Analysis, characterization, and loci of the tuf genes in lactobacillus and bifidobacterium species and their direct application for species identification.</title>
        <authorList>
            <person name="Ventura M."/>
            <person name="Canchaya C."/>
            <person name="Meylan V."/>
            <person name="Klaenhammer T.R."/>
            <person name="Zink R."/>
        </authorList>
    </citation>
    <scope>NUCLEOTIDE SEQUENCE [GENOMIC DNA]</scope>
    <source>
        <strain>CNCM I-1225 / La1 / NCC 533</strain>
    </source>
</reference>
<reference key="2">
    <citation type="journal article" date="2004" name="Proc. Natl. Acad. Sci. U.S.A.">
        <title>The genome sequence of the probiotic intestinal bacterium Lactobacillus johnsonii NCC 533.</title>
        <authorList>
            <person name="Pridmore R.D."/>
            <person name="Berger B."/>
            <person name="Desiere F."/>
            <person name="Vilanova D."/>
            <person name="Barretto C."/>
            <person name="Pittet A.-C."/>
            <person name="Zwahlen M.-C."/>
            <person name="Rouvet M."/>
            <person name="Altermann E."/>
            <person name="Barrangou R."/>
            <person name="Mollet B."/>
            <person name="Mercenier A."/>
            <person name="Klaenhammer T."/>
            <person name="Arigoni F."/>
            <person name="Schell M.A."/>
        </authorList>
    </citation>
    <scope>NUCLEOTIDE SEQUENCE [LARGE SCALE GENOMIC DNA]</scope>
    <source>
        <strain>CNCM I-1225 / La1 / NCC 533</strain>
    </source>
</reference>
<protein>
    <recommendedName>
        <fullName evidence="2">Elongation factor Tu</fullName>
        <shortName evidence="2">EF-Tu</shortName>
        <ecNumber evidence="2">3.6.5.3</ecNumber>
    </recommendedName>
</protein>
<dbReference type="EC" id="3.6.5.3" evidence="2"/>
<dbReference type="EMBL" id="AY372049">
    <property type="protein sequence ID" value="AAR25444.1"/>
    <property type="molecule type" value="Genomic_DNA"/>
</dbReference>
<dbReference type="EMBL" id="AE017198">
    <property type="protein sequence ID" value="AAS08831.1"/>
    <property type="molecule type" value="Genomic_DNA"/>
</dbReference>
<dbReference type="RefSeq" id="WP_004894320.1">
    <property type="nucleotide sequence ID" value="NC_005362.1"/>
</dbReference>
<dbReference type="SMR" id="Q74JU6"/>
<dbReference type="MoonProt" id="Q74JU6"/>
<dbReference type="GeneID" id="83570556"/>
<dbReference type="KEGG" id="ljo:LJ_1009"/>
<dbReference type="eggNOG" id="COG0050">
    <property type="taxonomic scope" value="Bacteria"/>
</dbReference>
<dbReference type="HOGENOM" id="CLU_007265_0_0_9"/>
<dbReference type="Proteomes" id="UP000000581">
    <property type="component" value="Chromosome"/>
</dbReference>
<dbReference type="GO" id="GO:0005737">
    <property type="term" value="C:cytoplasm"/>
    <property type="evidence" value="ECO:0000314"/>
    <property type="project" value="CAFA"/>
</dbReference>
<dbReference type="GO" id="GO:0005829">
    <property type="term" value="C:cytosol"/>
    <property type="evidence" value="ECO:0007669"/>
    <property type="project" value="TreeGrafter"/>
</dbReference>
<dbReference type="GO" id="GO:0010339">
    <property type="term" value="C:external side of cell wall"/>
    <property type="evidence" value="ECO:0000314"/>
    <property type="project" value="CAFA"/>
</dbReference>
<dbReference type="GO" id="GO:0009275">
    <property type="term" value="C:Gram-positive-bacterium-type cell wall"/>
    <property type="evidence" value="ECO:0000314"/>
    <property type="project" value="CAFA"/>
</dbReference>
<dbReference type="GO" id="GO:0005886">
    <property type="term" value="C:plasma membrane"/>
    <property type="evidence" value="ECO:0000314"/>
    <property type="project" value="CAFA"/>
</dbReference>
<dbReference type="GO" id="GO:0005525">
    <property type="term" value="F:GTP binding"/>
    <property type="evidence" value="ECO:0007669"/>
    <property type="project" value="UniProtKB-UniRule"/>
</dbReference>
<dbReference type="GO" id="GO:0003924">
    <property type="term" value="F:GTPase activity"/>
    <property type="evidence" value="ECO:0007669"/>
    <property type="project" value="InterPro"/>
</dbReference>
<dbReference type="GO" id="GO:0003746">
    <property type="term" value="F:translation elongation factor activity"/>
    <property type="evidence" value="ECO:0007669"/>
    <property type="project" value="UniProtKB-UniRule"/>
</dbReference>
<dbReference type="GO" id="GO:0044651">
    <property type="term" value="P:adhesion of symbiont to host epithelial cell"/>
    <property type="evidence" value="ECO:0000314"/>
    <property type="project" value="CAFA"/>
</dbReference>
<dbReference type="GO" id="GO:0032757">
    <property type="term" value="P:positive regulation of interleukin-8 production"/>
    <property type="evidence" value="ECO:0000315"/>
    <property type="project" value="CAFA"/>
</dbReference>
<dbReference type="GO" id="GO:0044068">
    <property type="term" value="P:symbiont-mediated perturbation of host cellular process"/>
    <property type="evidence" value="ECO:0000314"/>
    <property type="project" value="CAFA"/>
</dbReference>
<dbReference type="CDD" id="cd01884">
    <property type="entry name" value="EF_Tu"/>
    <property type="match status" value="1"/>
</dbReference>
<dbReference type="CDD" id="cd03697">
    <property type="entry name" value="EFTU_II"/>
    <property type="match status" value="1"/>
</dbReference>
<dbReference type="CDD" id="cd03707">
    <property type="entry name" value="EFTU_III"/>
    <property type="match status" value="1"/>
</dbReference>
<dbReference type="FunFam" id="2.40.30.10:FF:000001">
    <property type="entry name" value="Elongation factor Tu"/>
    <property type="match status" value="1"/>
</dbReference>
<dbReference type="FunFam" id="3.40.50.300:FF:000003">
    <property type="entry name" value="Elongation factor Tu"/>
    <property type="match status" value="1"/>
</dbReference>
<dbReference type="Gene3D" id="3.40.50.300">
    <property type="entry name" value="P-loop containing nucleotide triphosphate hydrolases"/>
    <property type="match status" value="1"/>
</dbReference>
<dbReference type="Gene3D" id="2.40.30.10">
    <property type="entry name" value="Translation factors"/>
    <property type="match status" value="2"/>
</dbReference>
<dbReference type="HAMAP" id="MF_00118_B">
    <property type="entry name" value="EF_Tu_B"/>
    <property type="match status" value="1"/>
</dbReference>
<dbReference type="InterPro" id="IPR041709">
    <property type="entry name" value="EF-Tu_GTP-bd"/>
</dbReference>
<dbReference type="InterPro" id="IPR050055">
    <property type="entry name" value="EF-Tu_GTPase"/>
</dbReference>
<dbReference type="InterPro" id="IPR004161">
    <property type="entry name" value="EFTu-like_2"/>
</dbReference>
<dbReference type="InterPro" id="IPR033720">
    <property type="entry name" value="EFTU_2"/>
</dbReference>
<dbReference type="InterPro" id="IPR031157">
    <property type="entry name" value="G_TR_CS"/>
</dbReference>
<dbReference type="InterPro" id="IPR027417">
    <property type="entry name" value="P-loop_NTPase"/>
</dbReference>
<dbReference type="InterPro" id="IPR005225">
    <property type="entry name" value="Small_GTP-bd"/>
</dbReference>
<dbReference type="InterPro" id="IPR000795">
    <property type="entry name" value="T_Tr_GTP-bd_dom"/>
</dbReference>
<dbReference type="InterPro" id="IPR009000">
    <property type="entry name" value="Transl_B-barrel_sf"/>
</dbReference>
<dbReference type="InterPro" id="IPR009001">
    <property type="entry name" value="Transl_elong_EF1A/Init_IF2_C"/>
</dbReference>
<dbReference type="InterPro" id="IPR004541">
    <property type="entry name" value="Transl_elong_EFTu/EF1A_bac/org"/>
</dbReference>
<dbReference type="InterPro" id="IPR004160">
    <property type="entry name" value="Transl_elong_EFTu/EF1A_C"/>
</dbReference>
<dbReference type="NCBIfam" id="TIGR00485">
    <property type="entry name" value="EF-Tu"/>
    <property type="match status" value="1"/>
</dbReference>
<dbReference type="NCBIfam" id="NF000766">
    <property type="entry name" value="PRK00049.1"/>
    <property type="match status" value="1"/>
</dbReference>
<dbReference type="NCBIfam" id="NF009372">
    <property type="entry name" value="PRK12735.1"/>
    <property type="match status" value="1"/>
</dbReference>
<dbReference type="NCBIfam" id="NF009373">
    <property type="entry name" value="PRK12736.1"/>
    <property type="match status" value="1"/>
</dbReference>
<dbReference type="NCBIfam" id="TIGR00231">
    <property type="entry name" value="small_GTP"/>
    <property type="match status" value="1"/>
</dbReference>
<dbReference type="PANTHER" id="PTHR43721:SF22">
    <property type="entry name" value="ELONGATION FACTOR TU, MITOCHONDRIAL"/>
    <property type="match status" value="1"/>
</dbReference>
<dbReference type="PANTHER" id="PTHR43721">
    <property type="entry name" value="ELONGATION FACTOR TU-RELATED"/>
    <property type="match status" value="1"/>
</dbReference>
<dbReference type="Pfam" id="PF00009">
    <property type="entry name" value="GTP_EFTU"/>
    <property type="match status" value="1"/>
</dbReference>
<dbReference type="Pfam" id="PF03144">
    <property type="entry name" value="GTP_EFTU_D2"/>
    <property type="match status" value="1"/>
</dbReference>
<dbReference type="Pfam" id="PF03143">
    <property type="entry name" value="GTP_EFTU_D3"/>
    <property type="match status" value="1"/>
</dbReference>
<dbReference type="PRINTS" id="PR00315">
    <property type="entry name" value="ELONGATNFCT"/>
</dbReference>
<dbReference type="SUPFAM" id="SSF50465">
    <property type="entry name" value="EF-Tu/eEF-1alpha/eIF2-gamma C-terminal domain"/>
    <property type="match status" value="1"/>
</dbReference>
<dbReference type="SUPFAM" id="SSF52540">
    <property type="entry name" value="P-loop containing nucleoside triphosphate hydrolases"/>
    <property type="match status" value="1"/>
</dbReference>
<dbReference type="SUPFAM" id="SSF50447">
    <property type="entry name" value="Translation proteins"/>
    <property type="match status" value="1"/>
</dbReference>
<dbReference type="PROSITE" id="PS00301">
    <property type="entry name" value="G_TR_1"/>
    <property type="match status" value="1"/>
</dbReference>
<dbReference type="PROSITE" id="PS51722">
    <property type="entry name" value="G_TR_2"/>
    <property type="match status" value="1"/>
</dbReference>
<accession>Q74JU6</accession>
<accession>Q6UE10</accession>
<name>EFTU_LACJO</name>
<comment type="function">
    <text evidence="2">GTP hydrolase that promotes the GTP-dependent binding of aminoacyl-tRNA to the A-site of ribosomes during protein biosynthesis.</text>
</comment>
<comment type="catalytic activity">
    <reaction evidence="2">
        <text>GTP + H2O = GDP + phosphate + H(+)</text>
        <dbReference type="Rhea" id="RHEA:19669"/>
        <dbReference type="ChEBI" id="CHEBI:15377"/>
        <dbReference type="ChEBI" id="CHEBI:15378"/>
        <dbReference type="ChEBI" id="CHEBI:37565"/>
        <dbReference type="ChEBI" id="CHEBI:43474"/>
        <dbReference type="ChEBI" id="CHEBI:58189"/>
        <dbReference type="EC" id="3.6.5.3"/>
    </reaction>
    <physiologicalReaction direction="left-to-right" evidence="2">
        <dbReference type="Rhea" id="RHEA:19670"/>
    </physiologicalReaction>
</comment>
<comment type="subunit">
    <text evidence="2">Monomer.</text>
</comment>
<comment type="subcellular location">
    <subcellularLocation>
        <location evidence="2">Cytoplasm</location>
    </subcellularLocation>
</comment>
<comment type="similarity">
    <text evidence="2">Belongs to the TRAFAC class translation factor GTPase superfamily. Classic translation factor GTPase family. EF-Tu/EF-1A subfamily.</text>
</comment>
<proteinExistence type="inferred from homology"/>
<gene>
    <name evidence="2" type="primary">tuf</name>
    <name type="ordered locus">LJ_1009</name>
</gene>
<evidence type="ECO:0000250" key="1"/>
<evidence type="ECO:0000255" key="2">
    <source>
        <dbReference type="HAMAP-Rule" id="MF_00118"/>
    </source>
</evidence>
<sequence>MAEKEHYERTKPHVNIGTIGHVDHGKTTLTAAITTVLAEDGLAQAEDYSQIDAAPEEKERGITINTAHVEYETKNRHYAHMDAPGHADYIKNMITGAAQMDGAILVVAATDGPMPQTREHILLARQVGVQYIVVFLNKVDLVDDPELIDLVEMEVRDLLSEYDYPGDDVPVIRGSALKALEGDPEQQDVIRKLMETVDEYIPTPERDTDKPFLMPVEDVFTITGRGTVASGRIDRGTVKVGDEVEIVGLTDKIEKSTVTGLEMFHKTLDLGEAGDNVGVLLRGIDRDQVERGQVLAAPGSIQTHKNFKGQVYILNKDEGGRHTPFFSDYRPQFYFHTTDVTGKIELPEGTEMVMPGDNVEFTVELIKPVAIEKGTKFTIREGGKTVGAGQVTEILD</sequence>
<keyword id="KW-0963">Cytoplasm</keyword>
<keyword id="KW-0251">Elongation factor</keyword>
<keyword id="KW-0342">GTP-binding</keyword>
<keyword id="KW-0378">Hydrolase</keyword>
<keyword id="KW-0460">Magnesium</keyword>
<keyword id="KW-0479">Metal-binding</keyword>
<keyword id="KW-0547">Nucleotide-binding</keyword>
<keyword id="KW-0648">Protein biosynthesis</keyword>